<evidence type="ECO:0000250" key="1"/>
<evidence type="ECO:0000250" key="2">
    <source>
        <dbReference type="UniProtKB" id="Q92888"/>
    </source>
</evidence>
<evidence type="ECO:0000255" key="3"/>
<evidence type="ECO:0000255" key="4">
    <source>
        <dbReference type="PROSITE-ProRule" id="PRU00062"/>
    </source>
</evidence>
<evidence type="ECO:0000255" key="5">
    <source>
        <dbReference type="PROSITE-ProRule" id="PRU00145"/>
    </source>
</evidence>
<evidence type="ECO:0000256" key="6">
    <source>
        <dbReference type="SAM" id="MobiDB-lite"/>
    </source>
</evidence>
<evidence type="ECO:0000269" key="7">
    <source>
    </source>
</evidence>
<evidence type="ECO:0000269" key="8">
    <source>
    </source>
</evidence>
<evidence type="ECO:0000269" key="9">
    <source>
    </source>
</evidence>
<evidence type="ECO:0000269" key="10">
    <source>
    </source>
</evidence>
<evidence type="ECO:0000269" key="11">
    <source>
    </source>
</evidence>
<evidence type="ECO:0000303" key="12">
    <source>
    </source>
</evidence>
<evidence type="ECO:0000303" key="13">
    <source>
    </source>
</evidence>
<evidence type="ECO:0000303" key="14">
    <source>
    </source>
</evidence>
<evidence type="ECO:0000303" key="15">
    <source ref="2"/>
</evidence>
<evidence type="ECO:0000305" key="16"/>
<evidence type="ECO:0007744" key="17">
    <source>
    </source>
</evidence>
<evidence type="ECO:0007744" key="18">
    <source>
    </source>
</evidence>
<dbReference type="EMBL" id="U58203">
    <property type="protein sequence ID" value="AAC52693.1"/>
    <property type="molecule type" value="mRNA"/>
</dbReference>
<dbReference type="EMBL" id="AF314539">
    <property type="protein sequence ID" value="AAG33860.1"/>
    <property type="molecule type" value="mRNA"/>
</dbReference>
<dbReference type="EMBL" id="AK157056">
    <property type="protein sequence ID" value="BAE33947.1"/>
    <property type="molecule type" value="mRNA"/>
</dbReference>
<dbReference type="EMBL" id="AK172354">
    <property type="protein sequence ID" value="BAE42963.1"/>
    <property type="molecule type" value="mRNA"/>
</dbReference>
<dbReference type="EMBL" id="BC012488">
    <property type="protein sequence ID" value="AAH12488.1"/>
    <property type="molecule type" value="mRNA"/>
</dbReference>
<dbReference type="EMBL" id="U89421">
    <property type="protein sequence ID" value="AAC36527.1"/>
    <property type="molecule type" value="mRNA"/>
</dbReference>
<dbReference type="EMBL" id="AY246272">
    <property type="protein sequence ID" value="AAO91658.1"/>
    <property type="molecule type" value="mRNA"/>
</dbReference>
<dbReference type="EMBL" id="AY246273">
    <property type="protein sequence ID" value="AAO91659.1"/>
    <property type="molecule type" value="mRNA"/>
</dbReference>
<dbReference type="CCDS" id="CCDS52141.1">
    <molecule id="Q61210-1"/>
</dbReference>
<dbReference type="CCDS" id="CCDS52142.1">
    <molecule id="Q61210-5"/>
</dbReference>
<dbReference type="CCDS" id="CCDS85239.1">
    <molecule id="Q61210-2"/>
</dbReference>
<dbReference type="RefSeq" id="NP_001123622.1">
    <molecule id="Q61210-5"/>
    <property type="nucleotide sequence ID" value="NM_001130150.2"/>
</dbReference>
<dbReference type="RefSeq" id="NP_001123623.1">
    <property type="nucleotide sequence ID" value="NM_001130151.1"/>
</dbReference>
<dbReference type="RefSeq" id="NP_001123624.1">
    <molecule id="Q61210-1"/>
    <property type="nucleotide sequence ID" value="NM_001130152.2"/>
</dbReference>
<dbReference type="RefSeq" id="NP_001123625.1">
    <molecule id="Q61210-1"/>
    <property type="nucleotide sequence ID" value="NM_001130153.2"/>
</dbReference>
<dbReference type="RefSeq" id="NP_001399572.1">
    <molecule id="Q61210-1"/>
    <property type="nucleotide sequence ID" value="NM_001412643.1"/>
</dbReference>
<dbReference type="RefSeq" id="NP_001399573.1">
    <molecule id="Q61210-2"/>
    <property type="nucleotide sequence ID" value="NM_001412644.1"/>
</dbReference>
<dbReference type="RefSeq" id="NP_032514.1">
    <molecule id="Q61210-2"/>
    <property type="nucleotide sequence ID" value="NM_008488.3"/>
</dbReference>
<dbReference type="RefSeq" id="XP_030098033.1">
    <molecule id="Q61210-5"/>
    <property type="nucleotide sequence ID" value="XM_030242173.1"/>
</dbReference>
<dbReference type="SMR" id="Q61210"/>
<dbReference type="BioGRID" id="201115">
    <property type="interactions" value="8"/>
</dbReference>
<dbReference type="FunCoup" id="Q61210">
    <property type="interactions" value="839"/>
</dbReference>
<dbReference type="IntAct" id="Q61210">
    <property type="interactions" value="11"/>
</dbReference>
<dbReference type="STRING" id="10090.ENSMUSP00000096280"/>
<dbReference type="GlyGen" id="Q61210">
    <property type="glycosylation" value="3 sites, 1 N-linked glycan (1 site), 1 O-linked glycan (1 site)"/>
</dbReference>
<dbReference type="iPTMnet" id="Q61210"/>
<dbReference type="PhosphoSitePlus" id="Q61210"/>
<dbReference type="SwissPalm" id="Q61210"/>
<dbReference type="jPOST" id="Q61210"/>
<dbReference type="PaxDb" id="10090-ENSMUSP00000096280"/>
<dbReference type="PeptideAtlas" id="Q61210"/>
<dbReference type="ProteomicsDB" id="283209">
    <molecule id="Q61210-1"/>
</dbReference>
<dbReference type="ProteomicsDB" id="283210">
    <molecule id="Q61210-2"/>
</dbReference>
<dbReference type="ProteomicsDB" id="283211">
    <molecule id="Q61210-3"/>
</dbReference>
<dbReference type="ProteomicsDB" id="283212">
    <molecule id="Q61210-4"/>
</dbReference>
<dbReference type="ProteomicsDB" id="283213">
    <molecule id="Q61210-5"/>
</dbReference>
<dbReference type="Pumba" id="Q61210"/>
<dbReference type="Antibodypedia" id="2765">
    <property type="antibodies" value="280 antibodies from 34 providers"/>
</dbReference>
<dbReference type="DNASU" id="16801"/>
<dbReference type="Ensembl" id="ENSMUST00000047873.16">
    <molecule id="Q61210-1"/>
    <property type="protein sequence ID" value="ENSMUSP00000046469.10"/>
    <property type="gene ID" value="ENSMUSG00000040940.19"/>
</dbReference>
<dbReference type="Ensembl" id="ENSMUST00000098683.11">
    <molecule id="Q61210-5"/>
    <property type="protein sequence ID" value="ENSMUSP00000096280.5"/>
    <property type="gene ID" value="ENSMUSG00000040940.19"/>
</dbReference>
<dbReference type="Ensembl" id="ENSMUST00000117419.8">
    <molecule id="Q61210-1"/>
    <property type="protein sequence ID" value="ENSMUSP00000113366.2"/>
    <property type="gene ID" value="ENSMUSG00000040940.19"/>
</dbReference>
<dbReference type="Ensembl" id="ENSMUST00000206508.2">
    <molecule id="Q61210-2"/>
    <property type="protein sequence ID" value="ENSMUSP00000146314.2"/>
    <property type="gene ID" value="ENSMUSG00000040940.19"/>
</dbReference>
<dbReference type="GeneID" id="16801"/>
<dbReference type="KEGG" id="mmu:16801"/>
<dbReference type="UCSC" id="uc009fqv.2">
    <molecule id="Q61210-2"/>
    <property type="organism name" value="mouse"/>
</dbReference>
<dbReference type="UCSC" id="uc009fqw.2">
    <molecule id="Q61210-5"/>
    <property type="organism name" value="mouse"/>
</dbReference>
<dbReference type="UCSC" id="uc009fqy.2">
    <molecule id="Q61210-1"/>
    <property type="organism name" value="mouse"/>
</dbReference>
<dbReference type="AGR" id="MGI:1353510"/>
<dbReference type="CTD" id="9138"/>
<dbReference type="MGI" id="MGI:1353510">
    <property type="gene designation" value="Arhgef1"/>
</dbReference>
<dbReference type="VEuPathDB" id="HostDB:ENSMUSG00000040940"/>
<dbReference type="eggNOG" id="KOG3520">
    <property type="taxonomic scope" value="Eukaryota"/>
</dbReference>
<dbReference type="GeneTree" id="ENSGT00940000161180"/>
<dbReference type="HOGENOM" id="CLU_003962_2_0_1"/>
<dbReference type="InParanoid" id="Q61210"/>
<dbReference type="OMA" id="GDSHCKY"/>
<dbReference type="PhylomeDB" id="Q61210"/>
<dbReference type="TreeFam" id="TF106495"/>
<dbReference type="Reactome" id="R-MMU-193648">
    <property type="pathway name" value="NRAGE signals death through JNK"/>
</dbReference>
<dbReference type="Reactome" id="R-MMU-416482">
    <property type="pathway name" value="G alpha (12/13) signalling events"/>
</dbReference>
<dbReference type="Reactome" id="R-MMU-8980692">
    <property type="pathway name" value="RHOA GTPase cycle"/>
</dbReference>
<dbReference type="Reactome" id="R-MMU-9013026">
    <property type="pathway name" value="RHOB GTPase cycle"/>
</dbReference>
<dbReference type="Reactome" id="R-MMU-9013106">
    <property type="pathway name" value="RHOC GTPase cycle"/>
</dbReference>
<dbReference type="BioGRID-ORCS" id="16801">
    <property type="hits" value="7 hits in 78 CRISPR screens"/>
</dbReference>
<dbReference type="ChiTaRS" id="Arhgef1">
    <property type="organism name" value="mouse"/>
</dbReference>
<dbReference type="PRO" id="PR:Q61210"/>
<dbReference type="Proteomes" id="UP000000589">
    <property type="component" value="Chromosome 7"/>
</dbReference>
<dbReference type="RNAct" id="Q61210">
    <property type="molecule type" value="protein"/>
</dbReference>
<dbReference type="Bgee" id="ENSMUSG00000040940">
    <property type="expression patterns" value="Expressed in granulocyte and 243 other cell types or tissues"/>
</dbReference>
<dbReference type="ExpressionAtlas" id="Q61210">
    <property type="expression patterns" value="baseline and differential"/>
</dbReference>
<dbReference type="GO" id="GO:0005829">
    <property type="term" value="C:cytosol"/>
    <property type="evidence" value="ECO:0007669"/>
    <property type="project" value="Ensembl"/>
</dbReference>
<dbReference type="GO" id="GO:0005886">
    <property type="term" value="C:plasma membrane"/>
    <property type="evidence" value="ECO:0007669"/>
    <property type="project" value="Ensembl"/>
</dbReference>
<dbReference type="GO" id="GO:0001664">
    <property type="term" value="F:G protein-coupled receptor binding"/>
    <property type="evidence" value="ECO:0007669"/>
    <property type="project" value="InterPro"/>
</dbReference>
<dbReference type="GO" id="GO:0005096">
    <property type="term" value="F:GTPase activator activity"/>
    <property type="evidence" value="ECO:0007669"/>
    <property type="project" value="UniProtKB-KW"/>
</dbReference>
<dbReference type="GO" id="GO:0005085">
    <property type="term" value="F:guanyl-nucleotide exchange factor activity"/>
    <property type="evidence" value="ECO:0007669"/>
    <property type="project" value="UniProtKB-KW"/>
</dbReference>
<dbReference type="GO" id="GO:0160221">
    <property type="term" value="P:Rho-activating G protein-coupled receptor signaling pathway"/>
    <property type="evidence" value="ECO:0007669"/>
    <property type="project" value="Ensembl"/>
</dbReference>
<dbReference type="CDD" id="cd14679">
    <property type="entry name" value="PH_p115RhoGEF"/>
    <property type="match status" value="1"/>
</dbReference>
<dbReference type="CDD" id="cd08755">
    <property type="entry name" value="RGS_p115RhoGEF"/>
    <property type="match status" value="1"/>
</dbReference>
<dbReference type="CDD" id="cd00160">
    <property type="entry name" value="RhoGEF"/>
    <property type="match status" value="1"/>
</dbReference>
<dbReference type="FunFam" id="1.20.900.10:FF:000006">
    <property type="entry name" value="Rho guanine nucleotide exchange factor (GEF) 11"/>
    <property type="match status" value="1"/>
</dbReference>
<dbReference type="FunFam" id="1.10.167.10:FF:000012">
    <property type="entry name" value="Rho guanine nucleotide exchange factor 1"/>
    <property type="match status" value="1"/>
</dbReference>
<dbReference type="FunFam" id="2.30.29.30:FF:000072">
    <property type="entry name" value="Rho guanine nucleotide exchange factor 1"/>
    <property type="match status" value="1"/>
</dbReference>
<dbReference type="Gene3D" id="1.20.900.10">
    <property type="entry name" value="Dbl homology (DH) domain"/>
    <property type="match status" value="1"/>
</dbReference>
<dbReference type="Gene3D" id="2.30.29.30">
    <property type="entry name" value="Pleckstrin-homology domain (PH domain)/Phosphotyrosine-binding domain (PTB)"/>
    <property type="match status" value="1"/>
</dbReference>
<dbReference type="Gene3D" id="1.10.167.10">
    <property type="entry name" value="Regulator of G-protein Signalling 4, domain 2"/>
    <property type="match status" value="1"/>
</dbReference>
<dbReference type="InterPro" id="IPR035899">
    <property type="entry name" value="DBL_dom_sf"/>
</dbReference>
<dbReference type="InterPro" id="IPR000219">
    <property type="entry name" value="DH_dom"/>
</dbReference>
<dbReference type="InterPro" id="IPR037887">
    <property type="entry name" value="p115RhoGEF_RGS"/>
</dbReference>
<dbReference type="InterPro" id="IPR011993">
    <property type="entry name" value="PH-like_dom_sf"/>
</dbReference>
<dbReference type="InterPro" id="IPR041020">
    <property type="entry name" value="PH_16"/>
</dbReference>
<dbReference type="InterPro" id="IPR001849">
    <property type="entry name" value="PH_domain"/>
</dbReference>
<dbReference type="InterPro" id="IPR015212">
    <property type="entry name" value="RGS-like_dom"/>
</dbReference>
<dbReference type="InterPro" id="IPR036305">
    <property type="entry name" value="RGS_sf"/>
</dbReference>
<dbReference type="InterPro" id="IPR044926">
    <property type="entry name" value="RGS_subdomain_2"/>
</dbReference>
<dbReference type="PANTHER" id="PTHR45872:SF4">
    <property type="entry name" value="RHO GUANINE NUCLEOTIDE EXCHANGE FACTOR 1"/>
    <property type="match status" value="1"/>
</dbReference>
<dbReference type="PANTHER" id="PTHR45872">
    <property type="entry name" value="RHO GUANINE NUCLEOTIDE EXCHANGE FACTOR 2, ISOFORM D"/>
    <property type="match status" value="1"/>
</dbReference>
<dbReference type="Pfam" id="PF17838">
    <property type="entry name" value="PH_16"/>
    <property type="match status" value="1"/>
</dbReference>
<dbReference type="Pfam" id="PF09128">
    <property type="entry name" value="RGS-like"/>
    <property type="match status" value="1"/>
</dbReference>
<dbReference type="Pfam" id="PF00621">
    <property type="entry name" value="RhoGEF"/>
    <property type="match status" value="1"/>
</dbReference>
<dbReference type="SMART" id="SM00233">
    <property type="entry name" value="PH"/>
    <property type="match status" value="1"/>
</dbReference>
<dbReference type="SMART" id="SM00325">
    <property type="entry name" value="RhoGEF"/>
    <property type="match status" value="1"/>
</dbReference>
<dbReference type="SUPFAM" id="SSF48065">
    <property type="entry name" value="DBL homology domain (DH-domain)"/>
    <property type="match status" value="1"/>
</dbReference>
<dbReference type="SUPFAM" id="SSF50729">
    <property type="entry name" value="PH domain-like"/>
    <property type="match status" value="1"/>
</dbReference>
<dbReference type="SUPFAM" id="SSF48097">
    <property type="entry name" value="Regulator of G-protein signaling, RGS"/>
    <property type="match status" value="1"/>
</dbReference>
<dbReference type="PROSITE" id="PS50010">
    <property type="entry name" value="DH_2"/>
    <property type="match status" value="1"/>
</dbReference>
<dbReference type="PROSITE" id="PS50003">
    <property type="entry name" value="PH_DOMAIN"/>
    <property type="match status" value="1"/>
</dbReference>
<protein>
    <recommendedName>
        <fullName>Rho guanine nucleotide exchange factor 1</fullName>
    </recommendedName>
    <alternativeName>
        <fullName>Lbc's second cousin</fullName>
    </alternativeName>
    <alternativeName>
        <fullName>Lymphoid blast crisis-like 2</fullName>
    </alternativeName>
</protein>
<comment type="function">
    <text evidence="8 9 11">Seems to play a role in the regulation of RhoA GTPase by guanine nucleotide-binding alpha-12 (GNA12) and alpha-13 (GNA13) subunits. Acts as a GTPase-activating protein (GAP) for GNA12 and GNA13, and as guanine nucleotide exchange factor (GEF) for RhoA GTPase. Activated G alpha 13/GNA13 stimulates the RhoGEF activity through interaction with the RGS-like domain. This GEF activity is inhibited by binding to activated GNA12. Mediates angiotensin-2-induced RhoA activation. Isoform 3 and isoform 4 do not homooligomerize and show an enhanced RhoGEF activity. In lymphoid follicles, may trigger activation of GNA13 as part of S1PR2-dependent signaling pathway that leads to inhibition of germinal center (GC) B cell growth and migration outside the GC niche.</text>
</comment>
<comment type="subunit">
    <text evidence="1 7 11">Interacts with RHOA, GNA12 and GNA13 (By similarity). Homooligomerizes through the coiled coil region. Interacts with CTNNAL1 (By similarity). May interact with CCPG1.</text>
</comment>
<comment type="interaction">
    <interactant intactId="EBI-641821">
        <id>Q61210</id>
    </interactant>
    <interactant intactId="EBI-432047">
        <id>Q64727</id>
        <label>Vcl</label>
    </interactant>
    <organismsDiffer>false</organismsDiffer>
    <experiments>3</experiments>
</comment>
<comment type="subcellular location">
    <subcellularLocation>
        <location evidence="1">Cytoplasm</location>
    </subcellularLocation>
    <subcellularLocation>
        <location evidence="1">Membrane</location>
    </subcellularLocation>
    <text evidence="1">Translocated to the membrane by activated GNA13 or LPA stimulation.</text>
</comment>
<comment type="alternative products">
    <event type="alternative splicing"/>
    <isoform>
        <id>Q61210-1</id>
        <name>1</name>
        <sequence type="displayed"/>
    </isoform>
    <isoform>
        <id>Q61210-2</id>
        <name>2</name>
        <sequence type="described" ref="VSP_008126"/>
    </isoform>
    <isoform>
        <id>Q61210-3</id>
        <name>3</name>
        <sequence type="described" ref="VSP_008127 VSP_008128"/>
    </isoform>
    <isoform>
        <id>Q61210-4</id>
        <name>4</name>
        <sequence type="described" ref="VSP_008129 VSP_008130"/>
    </isoform>
    <isoform>
        <id>Q61210-5</id>
        <name>5</name>
        <sequence type="described" ref="VSP_008126 VSP_026131"/>
    </isoform>
</comment>
<comment type="tissue specificity">
    <text evidence="10">Ubiquitously expressed.</text>
</comment>
<comment type="domain">
    <text evidence="1">The RGSL domain, also known as rgRGS domain, is necessary but not sufficient for full GAP activity.</text>
</comment>
<comment type="domain">
    <text>The DH domain is involved in interaction with CCPG1.</text>
</comment>
<comment type="PTM">
    <text evidence="1 8">Phosphorylated by PKCA (By similarity). Angiotensin-2 induced Tyr-737 phosphorylation is mediated by JAK2. Isoform 5 is phosphorylated at 'Ser-390'.</text>
</comment>
<comment type="disruption phenotype">
    <text evidence="8">Mice have reduced response to angiotensin-2 and lowered RhoA signaling pathway.</text>
</comment>
<comment type="caution">
    <text evidence="16">Ref.2 sequence was originally submitted as from rat origin.</text>
</comment>
<gene>
    <name type="primary">Arhgef1</name>
    <name type="synonym">Lbcl2</name>
    <name type="synonym">Lsc</name>
</gene>
<accession>Q61210</accession>
<accession>O89074</accession>
<accession>Q3T9Q7</accession>
<accession>Q80YE8</accession>
<accession>Q80YE9</accession>
<accession>Q91VL3</accession>
<feature type="chain" id="PRO_0000080907" description="Rho guanine nucleotide exchange factor 1">
    <location>
        <begin position="1"/>
        <end position="920"/>
    </location>
</feature>
<feature type="domain" description="RGSL">
    <location>
        <begin position="39"/>
        <end position="230"/>
    </location>
</feature>
<feature type="domain" description="DH" evidence="4">
    <location>
        <begin position="415"/>
        <end position="604"/>
    </location>
</feature>
<feature type="domain" description="PH" evidence="5">
    <location>
        <begin position="646"/>
        <end position="759"/>
    </location>
</feature>
<feature type="region of interest" description="Disordered" evidence="6">
    <location>
        <begin position="231"/>
        <end position="404"/>
    </location>
</feature>
<feature type="region of interest" description="Disordered" evidence="6">
    <location>
        <begin position="764"/>
        <end position="797"/>
    </location>
</feature>
<feature type="region of interest" description="Disordered" evidence="6">
    <location>
        <begin position="840"/>
        <end position="864"/>
    </location>
</feature>
<feature type="coiled-coil region" evidence="3">
    <location>
        <begin position="865"/>
        <end position="894"/>
    </location>
</feature>
<feature type="compositionally biased region" description="Basic and acidic residues" evidence="6">
    <location>
        <begin position="281"/>
        <end position="311"/>
    </location>
</feature>
<feature type="compositionally biased region" description="Acidic residues" evidence="6">
    <location>
        <begin position="364"/>
        <end position="380"/>
    </location>
</feature>
<feature type="modified residue" description="Phosphoserine" evidence="2">
    <location>
        <position position="373"/>
    </location>
</feature>
<feature type="modified residue" description="Phosphoserine" evidence="2">
    <location>
        <position position="408"/>
    </location>
</feature>
<feature type="modified residue" description="Phosphothreonine" evidence="2">
    <location>
        <position position="694"/>
    </location>
</feature>
<feature type="modified residue" description="Phosphotyrosine; by JAK2" evidence="8">
    <location>
        <position position="737"/>
    </location>
</feature>
<feature type="modified residue" description="Phosphoserine" evidence="18">
    <location>
        <position position="905"/>
    </location>
</feature>
<feature type="splice variant" id="VSP_008126" description="In isoform 2 and isoform 5." evidence="13 14 15">
    <location>
        <position position="291"/>
    </location>
</feature>
<feature type="splice variant" id="VSP_026131" description="In isoform 5." evidence="13">
    <original>ES</original>
    <variation>ERRWKRLSGRLGRSESLRVSDRRRPSRGSLGAKGRGGGRSRSDVDMDPGSATAVLGPTRRAT</variation>
    <location>
        <begin position="372"/>
        <end position="373"/>
    </location>
</feature>
<feature type="splice variant" id="VSP_008127" description="In isoform 3." evidence="12">
    <original>REPLLSSSENGT</original>
    <variation>SHPRGLEQREIG</variation>
    <location>
        <begin position="780"/>
        <end position="791"/>
    </location>
</feature>
<feature type="splice variant" id="VSP_008128" description="In isoform 3." evidence="12">
    <location>
        <begin position="792"/>
        <end position="920"/>
    </location>
</feature>
<feature type="splice variant" id="VSP_008129" description="In isoform 4." evidence="12">
    <original>VLSLKQILLSTEEDSGAGPPRDGDGVP</original>
    <variation>GVGRGILSPKTPPVPAWGDSVPQPGCT</variation>
    <location>
        <begin position="830"/>
        <end position="856"/>
    </location>
</feature>
<feature type="splice variant" id="VSP_008130" description="In isoform 4." evidence="12">
    <location>
        <begin position="857"/>
        <end position="920"/>
    </location>
</feature>
<feature type="sequence conflict" description="In Ref. 5; AAC36527." evidence="16" ref="5">
    <original>I</original>
    <variation>M</variation>
    <location>
        <position position="574"/>
    </location>
</feature>
<feature type="sequence conflict" description="In Ref. 5; AAC36527." evidence="16" ref="5">
    <original>I</original>
    <variation>T</variation>
    <location>
        <position position="663"/>
    </location>
</feature>
<feature type="sequence conflict" description="In Ref. 6; AAO91659." evidence="16" ref="6">
    <original>H</original>
    <variation>Y</variation>
    <location>
        <position position="689"/>
    </location>
</feature>
<feature type="modified residue" description="Phosphoserine" evidence="17">
    <location sequence="Q61210-5">
        <position position="386"/>
    </location>
</feature>
<feature type="modified residue" description="Phosphoserine" evidence="17">
    <location sequence="Q61210-5">
        <position position="390"/>
    </location>
</feature>
<feature type="modified residue" description="Phosphoserine" evidence="17 18">
    <location sequence="Q61210-5">
        <position position="412"/>
    </location>
</feature>
<feature type="modified residue" description="Phosphothreonine" evidence="17 18">
    <location sequence="Q61210-5">
        <position position="432"/>
    </location>
</feature>
<name>ARHG1_MOUSE</name>
<reference key="1">
    <citation type="journal article" date="1996" name="J. Biol. Chem.">
        <title>Expression cloning of lsc, a novel oncogene with structural similarities to the Dbl family of guanine nucleotide exchange factors.</title>
        <authorList>
            <person name="Whitehead I.P."/>
            <person name="Khosravi-Far R."/>
            <person name="Kirk H."/>
            <person name="Trigo-Gonzalez G."/>
            <person name="Der C.J."/>
            <person name="Kay R."/>
        </authorList>
    </citation>
    <scope>NUCLEOTIDE SEQUENCE [MRNA] (ISOFORM 2)</scope>
    <scope>TISSUE SPECIFICITY</scope>
</reference>
<reference key="2">
    <citation type="submission" date="2000-10" db="EMBL/GenBank/DDBJ databases">
        <authorList>
            <person name="Lanson N.A. Jr."/>
            <person name="Egeland D.B."/>
            <person name="Claycomb W.C."/>
        </authorList>
    </citation>
    <scope>NUCLEOTIDE SEQUENCE [MRNA] (ISOFORM 2)</scope>
</reference>
<reference key="3">
    <citation type="journal article" date="2005" name="Science">
        <title>The transcriptional landscape of the mammalian genome.</title>
        <authorList>
            <person name="Carninci P."/>
            <person name="Kasukawa T."/>
            <person name="Katayama S."/>
            <person name="Gough J."/>
            <person name="Frith M.C."/>
            <person name="Maeda N."/>
            <person name="Oyama R."/>
            <person name="Ravasi T."/>
            <person name="Lenhard B."/>
            <person name="Wells C."/>
            <person name="Kodzius R."/>
            <person name="Shimokawa K."/>
            <person name="Bajic V.B."/>
            <person name="Brenner S.E."/>
            <person name="Batalov S."/>
            <person name="Forrest A.R."/>
            <person name="Zavolan M."/>
            <person name="Davis M.J."/>
            <person name="Wilming L.G."/>
            <person name="Aidinis V."/>
            <person name="Allen J.E."/>
            <person name="Ambesi-Impiombato A."/>
            <person name="Apweiler R."/>
            <person name="Aturaliya R.N."/>
            <person name="Bailey T.L."/>
            <person name="Bansal M."/>
            <person name="Baxter L."/>
            <person name="Beisel K.W."/>
            <person name="Bersano T."/>
            <person name="Bono H."/>
            <person name="Chalk A.M."/>
            <person name="Chiu K.P."/>
            <person name="Choudhary V."/>
            <person name="Christoffels A."/>
            <person name="Clutterbuck D.R."/>
            <person name="Crowe M.L."/>
            <person name="Dalla E."/>
            <person name="Dalrymple B.P."/>
            <person name="de Bono B."/>
            <person name="Della Gatta G."/>
            <person name="di Bernardo D."/>
            <person name="Down T."/>
            <person name="Engstrom P."/>
            <person name="Fagiolini M."/>
            <person name="Faulkner G."/>
            <person name="Fletcher C.F."/>
            <person name="Fukushima T."/>
            <person name="Furuno M."/>
            <person name="Futaki S."/>
            <person name="Gariboldi M."/>
            <person name="Georgii-Hemming P."/>
            <person name="Gingeras T.R."/>
            <person name="Gojobori T."/>
            <person name="Green R.E."/>
            <person name="Gustincich S."/>
            <person name="Harbers M."/>
            <person name="Hayashi Y."/>
            <person name="Hensch T.K."/>
            <person name="Hirokawa N."/>
            <person name="Hill D."/>
            <person name="Huminiecki L."/>
            <person name="Iacono M."/>
            <person name="Ikeo K."/>
            <person name="Iwama A."/>
            <person name="Ishikawa T."/>
            <person name="Jakt M."/>
            <person name="Kanapin A."/>
            <person name="Katoh M."/>
            <person name="Kawasawa Y."/>
            <person name="Kelso J."/>
            <person name="Kitamura H."/>
            <person name="Kitano H."/>
            <person name="Kollias G."/>
            <person name="Krishnan S.P."/>
            <person name="Kruger A."/>
            <person name="Kummerfeld S.K."/>
            <person name="Kurochkin I.V."/>
            <person name="Lareau L.F."/>
            <person name="Lazarevic D."/>
            <person name="Lipovich L."/>
            <person name="Liu J."/>
            <person name="Liuni S."/>
            <person name="McWilliam S."/>
            <person name="Madan Babu M."/>
            <person name="Madera M."/>
            <person name="Marchionni L."/>
            <person name="Matsuda H."/>
            <person name="Matsuzawa S."/>
            <person name="Miki H."/>
            <person name="Mignone F."/>
            <person name="Miyake S."/>
            <person name="Morris K."/>
            <person name="Mottagui-Tabar S."/>
            <person name="Mulder N."/>
            <person name="Nakano N."/>
            <person name="Nakauchi H."/>
            <person name="Ng P."/>
            <person name="Nilsson R."/>
            <person name="Nishiguchi S."/>
            <person name="Nishikawa S."/>
            <person name="Nori F."/>
            <person name="Ohara O."/>
            <person name="Okazaki Y."/>
            <person name="Orlando V."/>
            <person name="Pang K.C."/>
            <person name="Pavan W.J."/>
            <person name="Pavesi G."/>
            <person name="Pesole G."/>
            <person name="Petrovsky N."/>
            <person name="Piazza S."/>
            <person name="Reed J."/>
            <person name="Reid J.F."/>
            <person name="Ring B.Z."/>
            <person name="Ringwald M."/>
            <person name="Rost B."/>
            <person name="Ruan Y."/>
            <person name="Salzberg S.L."/>
            <person name="Sandelin A."/>
            <person name="Schneider C."/>
            <person name="Schoenbach C."/>
            <person name="Sekiguchi K."/>
            <person name="Semple C.A."/>
            <person name="Seno S."/>
            <person name="Sessa L."/>
            <person name="Sheng Y."/>
            <person name="Shibata Y."/>
            <person name="Shimada H."/>
            <person name="Shimada K."/>
            <person name="Silva D."/>
            <person name="Sinclair B."/>
            <person name="Sperling S."/>
            <person name="Stupka E."/>
            <person name="Sugiura K."/>
            <person name="Sultana R."/>
            <person name="Takenaka Y."/>
            <person name="Taki K."/>
            <person name="Tammoja K."/>
            <person name="Tan S.L."/>
            <person name="Tang S."/>
            <person name="Taylor M.S."/>
            <person name="Tegner J."/>
            <person name="Teichmann S.A."/>
            <person name="Ueda H.R."/>
            <person name="van Nimwegen E."/>
            <person name="Verardo R."/>
            <person name="Wei C.L."/>
            <person name="Yagi K."/>
            <person name="Yamanishi H."/>
            <person name="Zabarovsky E."/>
            <person name="Zhu S."/>
            <person name="Zimmer A."/>
            <person name="Hide W."/>
            <person name="Bult C."/>
            <person name="Grimmond S.M."/>
            <person name="Teasdale R.D."/>
            <person name="Liu E.T."/>
            <person name="Brusic V."/>
            <person name="Quackenbush J."/>
            <person name="Wahlestedt C."/>
            <person name="Mattick J.S."/>
            <person name="Hume D.A."/>
            <person name="Kai C."/>
            <person name="Sasaki D."/>
            <person name="Tomaru Y."/>
            <person name="Fukuda S."/>
            <person name="Kanamori-Katayama M."/>
            <person name="Suzuki M."/>
            <person name="Aoki J."/>
            <person name="Arakawa T."/>
            <person name="Iida J."/>
            <person name="Imamura K."/>
            <person name="Itoh M."/>
            <person name="Kato T."/>
            <person name="Kawaji H."/>
            <person name="Kawagashira N."/>
            <person name="Kawashima T."/>
            <person name="Kojima M."/>
            <person name="Kondo S."/>
            <person name="Konno H."/>
            <person name="Nakano K."/>
            <person name="Ninomiya N."/>
            <person name="Nishio T."/>
            <person name="Okada M."/>
            <person name="Plessy C."/>
            <person name="Shibata K."/>
            <person name="Shiraki T."/>
            <person name="Suzuki S."/>
            <person name="Tagami M."/>
            <person name="Waki K."/>
            <person name="Watahiki A."/>
            <person name="Okamura-Oho Y."/>
            <person name="Suzuki H."/>
            <person name="Kawai J."/>
            <person name="Hayashizaki Y."/>
        </authorList>
    </citation>
    <scope>NUCLEOTIDE SEQUENCE [LARGE SCALE MRNA] (ISOFORM 5)</scope>
    <source>
        <strain>NOD</strain>
        <tissue>Spleen</tissue>
    </source>
</reference>
<reference key="4">
    <citation type="journal article" date="2004" name="Genome Res.">
        <title>The status, quality, and expansion of the NIH full-length cDNA project: the Mammalian Gene Collection (MGC).</title>
        <authorList>
            <consortium name="The MGC Project Team"/>
        </authorList>
    </citation>
    <scope>NUCLEOTIDE SEQUENCE [LARGE SCALE MRNA] (ISOFORM 1)</scope>
    <source>
        <tissue>Mammary tumor</tissue>
    </source>
</reference>
<reference key="5">
    <citation type="journal article" date="1998" name="Mol. Immunol.">
        <title>Expressed genes in interleukin-4 treated B cells identified by cDNA representational difference analysis.</title>
        <authorList>
            <person name="Chu C.C."/>
            <person name="Paul W.E."/>
        </authorList>
    </citation>
    <scope>NUCLEOTIDE SEQUENCE [MRNA] OF 557-720</scope>
    <source>
        <strain>BALB/cJ</strain>
        <tissue>Spleen</tissue>
    </source>
</reference>
<reference key="6">
    <citation type="journal article" date="2003" name="J. Biol. Chem.">
        <title>The Rho guanine exchange factor Lsc homo-oligomerizes and is negatively regulated through domains in its carboxyl-terminus that are absent in novel splenic isoforms.</title>
        <authorList>
            <person name="Eisenhaure T.M."/>
            <person name="Francis S.A."/>
            <person name="Willison L.D."/>
            <person name="Coughlin S.R."/>
            <person name="Lerner D.J."/>
        </authorList>
    </citation>
    <scope>NUCLEOTIDE SEQUENCE [MRNA] OF 670-920 (ISOFORMS 3 AND 4)</scope>
    <scope>FUNCTION (ISOFORMS 3 AND 4)</scope>
    <scope>SUBUNIT</scope>
    <source>
        <strain>C57BL/6J</strain>
        <tissue>Spleen</tissue>
    </source>
</reference>
<reference key="7">
    <citation type="journal article" date="1996" name="J. Biol. Chem.">
        <title>Lfc and Lsc oncoproteins represent two new guanine nucleotide exchange factors for the Rho GTP-binding protein.</title>
        <authorList>
            <person name="Glaven J.A."/>
            <person name="Whitehead I.P."/>
            <person name="Nomanbhoy T."/>
            <person name="Kay R."/>
            <person name="Cerione R.A."/>
        </authorList>
    </citation>
    <scope>FUNCTION</scope>
    <scope>INTERACTION WITH RHOA</scope>
</reference>
<reference key="8">
    <citation type="journal article" date="2006" name="Mol. Cell. Biol.">
        <title>Ccpg1, a novel scaffold protein that regulates the activity of the Rho guanine nucleotide exchange factor Dbs.</title>
        <authorList>
            <person name="Kostenko E.V."/>
            <person name="Olabisi O.O."/>
            <person name="Sahay S."/>
            <person name="Rodriguez P.L."/>
            <person name="Whitehead I.P."/>
        </authorList>
    </citation>
    <scope>POSSIBLE INTERACTION WITH CCPG1</scope>
</reference>
<reference key="9">
    <citation type="journal article" date="2009" name="Immunity">
        <title>The phagosomal proteome in interferon-gamma-activated macrophages.</title>
        <authorList>
            <person name="Trost M."/>
            <person name="English L."/>
            <person name="Lemieux S."/>
            <person name="Courcelles M."/>
            <person name="Desjardins M."/>
            <person name="Thibault P."/>
        </authorList>
    </citation>
    <scope>PHOSPHORYLATION [LARGE SCALE ANALYSIS] AT SER-386; SER-390; SER-412 AND THR-432 (ISOFORM 5)</scope>
    <scope>IDENTIFICATION BY MASS SPECTROMETRY [LARGE SCALE ANALYSIS]</scope>
</reference>
<reference key="10">
    <citation type="journal article" date="2010" name="Cell">
        <title>A tissue-specific atlas of mouse protein phosphorylation and expression.</title>
        <authorList>
            <person name="Huttlin E.L."/>
            <person name="Jedrychowski M.P."/>
            <person name="Elias J.E."/>
            <person name="Goswami T."/>
            <person name="Rad R."/>
            <person name="Beausoleil S.A."/>
            <person name="Villen J."/>
            <person name="Haas W."/>
            <person name="Sowa M.E."/>
            <person name="Gygi S.P."/>
        </authorList>
    </citation>
    <scope>PHOSPHORYLATION [LARGE SCALE ANALYSIS] AT SER-905</scope>
    <scope>PHOSPHORYLATION [LARGE SCALE ANALYSIS] AT SER-412 AND THR-432 (ISOFORM 5)</scope>
    <scope>IDENTIFICATION BY MASS SPECTROMETRY [LARGE SCALE ANALYSIS]</scope>
    <source>
        <tissue>Brain</tissue>
        <tissue>Brown adipose tissue</tissue>
        <tissue>Heart</tissue>
        <tissue>Kidney</tissue>
        <tissue>Liver</tissue>
        <tissue>Lung</tissue>
        <tissue>Pancreas</tissue>
        <tissue>Spleen</tissue>
        <tissue>Testis</tissue>
    </source>
</reference>
<reference key="11">
    <citation type="journal article" date="2010" name="Nat. Med.">
        <title>The Rho exchange factor Arhgef1 mediates the effects of angiotensin II on vascular tone and blood pressure.</title>
        <authorList>
            <person name="Guilluy C."/>
            <person name="Bregeon J."/>
            <person name="Toumaniantz G."/>
            <person name="Rolli-Derkinderen M."/>
            <person name="Retailleau K."/>
            <person name="Loufrani L."/>
            <person name="Henrion D."/>
            <person name="Scalbert E."/>
            <person name="Bril A."/>
            <person name="Torres R.M."/>
            <person name="Offermanns S."/>
            <person name="Pacaud P."/>
            <person name="Loirand G."/>
        </authorList>
    </citation>
    <scope>FUNCTION</scope>
    <scope>DISRUPTION PHENOTYPE</scope>
    <scope>PHOSPHORYLATION AT TYR-737</scope>
</reference>
<reference key="12">
    <citation type="journal article" date="2014" name="Nature">
        <title>Loss of signalling via Galpha13 in germinal centre B-cell-derived lymphoma.</title>
        <authorList>
            <person name="Muppidi J.R."/>
            <person name="Schmitz R."/>
            <person name="Green J.A."/>
            <person name="Xiao W."/>
            <person name="Larsen A.B."/>
            <person name="Braun S.E."/>
            <person name="An J."/>
            <person name="Xu Y."/>
            <person name="Rosenwald A."/>
            <person name="Ott G."/>
            <person name="Gascoyne R.D."/>
            <person name="Rimsza L.M."/>
            <person name="Campo E."/>
            <person name="Jaffe E.S."/>
            <person name="Delabie J."/>
            <person name="Smeland E.B."/>
            <person name="Braziel R.M."/>
            <person name="Tubbs R.R."/>
            <person name="Cook J.R."/>
            <person name="Weisenburger D.D."/>
            <person name="Chan W.C."/>
            <person name="Vaidehi N."/>
            <person name="Staudt L.M."/>
            <person name="Cyster J.G."/>
        </authorList>
    </citation>
    <scope>FUNCTION</scope>
</reference>
<organism>
    <name type="scientific">Mus musculus</name>
    <name type="common">Mouse</name>
    <dbReference type="NCBI Taxonomy" id="10090"/>
    <lineage>
        <taxon>Eukaryota</taxon>
        <taxon>Metazoa</taxon>
        <taxon>Chordata</taxon>
        <taxon>Craniata</taxon>
        <taxon>Vertebrata</taxon>
        <taxon>Euteleostomi</taxon>
        <taxon>Mammalia</taxon>
        <taxon>Eutheria</taxon>
        <taxon>Euarchontoglires</taxon>
        <taxon>Glires</taxon>
        <taxon>Rodentia</taxon>
        <taxon>Myomorpha</taxon>
        <taxon>Muroidea</taxon>
        <taxon>Muridae</taxon>
        <taxon>Murinae</taxon>
        <taxon>Mus</taxon>
        <taxon>Mus</taxon>
    </lineage>
</organism>
<proteinExistence type="evidence at protein level"/>
<keyword id="KW-0025">Alternative splicing</keyword>
<keyword id="KW-0175">Coiled coil</keyword>
<keyword id="KW-0963">Cytoplasm</keyword>
<keyword id="KW-0343">GTPase activation</keyword>
<keyword id="KW-0344">Guanine-nucleotide releasing factor</keyword>
<keyword id="KW-0472">Membrane</keyword>
<keyword id="KW-0597">Phosphoprotein</keyword>
<keyword id="KW-1185">Reference proteome</keyword>
<sequence length="920" mass="102805">MGEVAGGAAPGPPRSGLVSIIIGAEDEDFENELEANSEDQNSQFQSLEQVKRRPAHLMALLQHVALQFEPGPLLCCLHADMLSSLGPKEAKKAFLDFYHSFLEKTAVLRVPVPPSVAFELDRTRPDLISEDVQRRFIQEVVQSQQAAVSRQLEDFRSKRLMGMTPWEQELSLLEPWIGKDRGNYEARERHVAERLLSHLEETQHTISTDEEKSAAVVTAISLYMRHLGVRTKSGDKKSGRNFFRKKVMGNRRSDEPPKTKKGLSSILDPARWNRGEPSAPDCRHLKVEADAEKPGPADRKGGLGMSSRDRTVGTPGQDNPGVSLHPLSTDSVDSREPGVDTPQEPGDTPPQGPTSLEPLAPPESTEDNGETESPEPGDDGEPGRSGLELEPEEPPGWRELVPPDTLLSLPKSQVKRQEVISELLVTEAAHVRMLRVLHDLFYQPMADGGFFPLDELQNIFPSLDELIEVHSLFLDRLMKRRQESGYLIEEIGDVLLARFDGAEGSWFQKISSRFCSRQSFALEQLKAKQRKEPRFCAFVQEAESRPRCRRLQLKDMIPTEMQRLTKYPLLLQSIGQNTEESTERGKVELAAECCREILHHVNQAVRDMEDLLRLKDYQRRLDLTHLRQSSDPMLSEFKNLDITKKKLVHEGPLTWRVTKDKAIEVHVLLLDDLLLLLQRQDERLLLKSHSRTLTPTPDGKTMLRPVLRLTSAMTREVATDHKAFYVIFTWDQEAQIYELVAQTSSERKNWCNLITETAGSLKVPAPASRLKPRPSPSSIREPLLSSSENGTGGAEMAPADARTERLLNDLLPFCRPGPEGQLAATALQKVLSLKQILLSTEEDSGAGPPRDGDGVPGGRAPGPVHTQEIEENLLSLEVAIRQLEELEEEFCRLRPLLSQLGGTLSPNLAAPERSAQTGLS</sequence>